<accession>B1AY13</accession>
<accession>Q8BLI7</accession>
<evidence type="ECO:0000250" key="1"/>
<evidence type="ECO:0000250" key="2">
    <source>
        <dbReference type="UniProtKB" id="Q9UPU5"/>
    </source>
</evidence>
<evidence type="ECO:0000255" key="3">
    <source>
        <dbReference type="PROSITE-ProRule" id="PRU00212"/>
    </source>
</evidence>
<evidence type="ECO:0000255" key="4">
    <source>
        <dbReference type="PROSITE-ProRule" id="PRU10092"/>
    </source>
</evidence>
<evidence type="ECO:0000255" key="5">
    <source>
        <dbReference type="PROSITE-ProRule" id="PRU10093"/>
    </source>
</evidence>
<evidence type="ECO:0000256" key="6">
    <source>
        <dbReference type="SAM" id="MobiDB-lite"/>
    </source>
</evidence>
<evidence type="ECO:0000303" key="7">
    <source>
    </source>
</evidence>
<evidence type="ECO:0000305" key="8"/>
<evidence type="ECO:0007744" key="9">
    <source>
    </source>
</evidence>
<evidence type="ECO:0007744" key="10">
    <source>
    </source>
</evidence>
<evidence type="ECO:0007744" key="11">
    <source>
    </source>
</evidence>
<evidence type="ECO:0007744" key="12">
    <source>
    </source>
</evidence>
<gene>
    <name type="primary">Usp24</name>
</gene>
<sequence length="2617" mass="294001">MESEEEQHMTTLLCMGFSDPATIRKALRLAKNDINEAVALLTNERPGLDYGGYEPMDSGGPSPGPGGGPRGDSGSDGSGPSRGGSTGGGGGFDPPPAYHEVVDAEKNDENGNCSGEGIEFPTTNLYELESRVLTDHWSIPYKREESLGKCLLASTYLARLGLSESDENCKRFMERCMPEAFKKLLTSSAVHKWGTEIHEGIYNMLMLLIELVAERMKQDPIPIGLLGVLTMAFNPDNEYHFKNRMKVSQRNWAEVFGEGNMFAISPVSTFQKEPHGWVVDLVNKFGELGGFAAIQAKLHSEDIELGAVSALVQPLGVCAEYLNSSVVQPMLDPVILTTIQDVRSVEEKDLKDKRLVSIPELLSAIKLLCMRFQPALVTTVDALRLDILLRMLKSPHFSAKMNSLKEVTKLIEDSTLSKSVKNAIDTDRLLDWLVENSVLSIALEGNIDQAQYCDRIKGIIELLGSKLSLDELTKIWKIQSGQSSTVIENIHTIIAAAAVKFNADQLNHLFVLIQKSWETESDRVRQKLLSLIGRIGREARFEATSGKVLDVLWELAHLPTLPSSLIQQALEEHLTILSDAYAVKEAVKRSYIIKCIEDIKRPGEWSSLEKNKKDGFKSSQLNNPQFVWVVPALRQLHEITRSFIKQTYQKQDKSIIQDLKKNFEIVKLVTGSLLACHRLAAAVAGPGGLTGLTLVDGRYTYREYLEAHLKFLAFFLQEATLYLGWNRAKEIWECLVTGQDVCELDREMCFEWFTKGQHDLESDVQQQLFKEKILKLESYEITMNGFNLFKTFFENVNLCDHRLKRQGAQLYVEKLELVGMDFIWKIAMESPDEEIANEAIQLIINYSYINLNPRLKKDSVSLHKKFIADCYTRLEAASSALGGPTLTHAVTRATKMLTATAMPTVATSVQSPYRSTKLVIIERLLLLAERYVITIEDFYSVPRTILPHGASFHGHLLTLNVTYESTKDTFTVEAHSNETIGSVRWKIAKQLCSPVDNIQIFTNDSLLTVNKDQKLLHQLGFSDEQVLTVKTSGSGTPSGSSADSSTSSSSSSSGAFSSSYAMEQEKSLPGVVMALVCNVFDMLYQLANLEEPRITLRVRKLLLLIPTDPAIQEALDQLDSLGRKKTLLSETSSQSSKSPSLSSKQQHQPSASSILESLFRSFAPGMSTFRVLYNLEVLSSKLMPTADDDMARSCAKSFCENFLKAGGLSLVVNVMQRDSIPSEVDYETRQGVYSICLQLARFLLVGQTMPTSLDEDLTKDGIEALSSRPFRNVSRQTSRQMSLCGTPEKSSYRQLSVSDRSSIRVEEIIPAARVAIQTMEASDFTATVACFMRLSWAAAAGRLDLVGSSQPIKESNSLFPAGIRSRLSSSGSNCSSSSEGEPAALHAGICVRQQSVSTKDALIAGEALSLLVTCLQLRSQQLASFYSLPCVADFIIDILLGSPSAEIRRVACDQLYTLSQTDTSAHPEVQKPNQFLLGVILTAQLPLWSPTSIMRGVNQRLLSQCMEYFDLRCQLLDDLTTSEMDQLRISPATMLEDEITWLDNFEPNRTADCETSEADNILLAGHLRLIKTLLSLCGAEKEMLGSSLIKPLLDDFLFRASRIIVNSHSPASSAAISQQDFHPKCSTVNSRLAAYEVLVMLADSSPSNLQIITKELLSMHHQPDPALTKEFDYLPPVDSRSSSGFVGLRNGGATCYMNAVFQQLYMQPGLPESLLSVDDDTDNPDDSVFYQVQSLFGHLMESKLQYYVPENFWKIFKMWNKELYVREQQDAYEFFTSLIDQMDEYLKKMGREQIFKNTFQGIYSDQKICKDCPHRYEREEAFMALNLGVTSCQSLEISLDQFVRGEVLEGSNAYYCEKCKEKRITVKRTCIKSLPSVLVIHLMRFGFDWESGRSIKYDEQIRFPWMLNMEPYTVAGMARQDSSSEVGENGRNMDQGGGGSPRKKVALTENYELVGVIVHSGQAHAGHYYSFIKDRRGCGKGKWYKFNDTVIEEFDLNDETLEYECFGGEYRPKVYDQTNPYTDVRRRYWNAYMLFYQRVSDQNSPVLPKKSRVSVVRQEAEDLSLSAPSSPEISPQSSPRPHRPNNDRLSILTKLVKKGEKKGLFVEKMPARIYQMVRDENLKFMKNRDVYSSDYFSFVLSLASLNATKLKHPYYPCMAKVSLQLAIQFLFQTYLRTKKKLRVDTEEWIATIEALLSKSLDACQWLVEYFISSEGRELVKVFLLECSVREVRVAVATILEKTLDSALFYQDKLKSLHQLLEVLLALLDKDVPENCKNCAQYFSLFNTFVQKQGIRAGDLLLRHSALRHMISFLLGVSRQNSQIRRWSSAQAREFGNLHNTVALLVLHSDVSSQRNVAPGIFKQRPPISVAPSSPLLPLHEEVEALLFLSEGKPYLLEVMFALRELTGSLLALMEMVVYCCFCNEHFSFTMLHFIKNQLETAPPHELKNTFQLLHEVLVIEDPIQVERVKFVFETENGLLALMHHSNHVDSSRCYQCVKFLVTLAQKCPAAKEYFKENSHHWSWAVQWLQKKMSEHYWTPQSNVSNETSTGKTFQRTISAQDTLAYATALLNEKEQSGSSNGSESSPANENGERHLQQGSESPMMIGELRSDLDDVDP</sequence>
<keyword id="KW-0025">Alternative splicing</keyword>
<keyword id="KW-0378">Hydrolase</keyword>
<keyword id="KW-0597">Phosphoprotein</keyword>
<keyword id="KW-0645">Protease</keyword>
<keyword id="KW-1185">Reference proteome</keyword>
<keyword id="KW-0788">Thiol protease</keyword>
<keyword id="KW-0833">Ubl conjugation pathway</keyword>
<name>UBP24_MOUSE</name>
<comment type="function">
    <text evidence="1">Protease that can remove conjugated ubiquitin from target proteins and polyubiquitin chains. Deubiquitinates DDB2, preventing its proteasomal degradation (By similarity).</text>
</comment>
<comment type="catalytic activity">
    <reaction>
        <text>Thiol-dependent hydrolysis of ester, thioester, amide, peptide and isopeptide bonds formed by the C-terminal Gly of ubiquitin (a 76-residue protein attached to proteins as an intracellular targeting signal).</text>
        <dbReference type="EC" id="3.4.19.12"/>
    </reaction>
</comment>
<comment type="alternative products">
    <event type="alternative splicing"/>
    <isoform>
        <id>B1AY13-1</id>
        <name>1</name>
        <sequence type="displayed"/>
    </isoform>
    <isoform>
        <id>B1AY13-2</id>
        <name>2</name>
        <sequence type="described" ref="VSP_035661 VSP_035662"/>
    </isoform>
</comment>
<comment type="similarity">
    <text evidence="8">Belongs to the peptidase C19 family.</text>
</comment>
<protein>
    <recommendedName>
        <fullName>Ubiquitin carboxyl-terminal hydrolase 24</fullName>
        <ecNumber>3.4.19.12</ecNumber>
    </recommendedName>
    <alternativeName>
        <fullName>Deubiquitinating enzyme 24</fullName>
    </alternativeName>
    <alternativeName>
        <fullName>Ubiquitin thioesterase 24</fullName>
    </alternativeName>
    <alternativeName>
        <fullName>Ubiquitin-specific-processing protease 24</fullName>
    </alternativeName>
</protein>
<reference key="1">
    <citation type="journal article" date="2005" name="Science">
        <title>The transcriptional landscape of the mammalian genome.</title>
        <authorList>
            <person name="Carninci P."/>
            <person name="Kasukawa T."/>
            <person name="Katayama S."/>
            <person name="Gough J."/>
            <person name="Frith M.C."/>
            <person name="Maeda N."/>
            <person name="Oyama R."/>
            <person name="Ravasi T."/>
            <person name="Lenhard B."/>
            <person name="Wells C."/>
            <person name="Kodzius R."/>
            <person name="Shimokawa K."/>
            <person name="Bajic V.B."/>
            <person name="Brenner S.E."/>
            <person name="Batalov S."/>
            <person name="Forrest A.R."/>
            <person name="Zavolan M."/>
            <person name="Davis M.J."/>
            <person name="Wilming L.G."/>
            <person name="Aidinis V."/>
            <person name="Allen J.E."/>
            <person name="Ambesi-Impiombato A."/>
            <person name="Apweiler R."/>
            <person name="Aturaliya R.N."/>
            <person name="Bailey T.L."/>
            <person name="Bansal M."/>
            <person name="Baxter L."/>
            <person name="Beisel K.W."/>
            <person name="Bersano T."/>
            <person name="Bono H."/>
            <person name="Chalk A.M."/>
            <person name="Chiu K.P."/>
            <person name="Choudhary V."/>
            <person name="Christoffels A."/>
            <person name="Clutterbuck D.R."/>
            <person name="Crowe M.L."/>
            <person name="Dalla E."/>
            <person name="Dalrymple B.P."/>
            <person name="de Bono B."/>
            <person name="Della Gatta G."/>
            <person name="di Bernardo D."/>
            <person name="Down T."/>
            <person name="Engstrom P."/>
            <person name="Fagiolini M."/>
            <person name="Faulkner G."/>
            <person name="Fletcher C.F."/>
            <person name="Fukushima T."/>
            <person name="Furuno M."/>
            <person name="Futaki S."/>
            <person name="Gariboldi M."/>
            <person name="Georgii-Hemming P."/>
            <person name="Gingeras T.R."/>
            <person name="Gojobori T."/>
            <person name="Green R.E."/>
            <person name="Gustincich S."/>
            <person name="Harbers M."/>
            <person name="Hayashi Y."/>
            <person name="Hensch T.K."/>
            <person name="Hirokawa N."/>
            <person name="Hill D."/>
            <person name="Huminiecki L."/>
            <person name="Iacono M."/>
            <person name="Ikeo K."/>
            <person name="Iwama A."/>
            <person name="Ishikawa T."/>
            <person name="Jakt M."/>
            <person name="Kanapin A."/>
            <person name="Katoh M."/>
            <person name="Kawasawa Y."/>
            <person name="Kelso J."/>
            <person name="Kitamura H."/>
            <person name="Kitano H."/>
            <person name="Kollias G."/>
            <person name="Krishnan S.P."/>
            <person name="Kruger A."/>
            <person name="Kummerfeld S.K."/>
            <person name="Kurochkin I.V."/>
            <person name="Lareau L.F."/>
            <person name="Lazarevic D."/>
            <person name="Lipovich L."/>
            <person name="Liu J."/>
            <person name="Liuni S."/>
            <person name="McWilliam S."/>
            <person name="Madan Babu M."/>
            <person name="Madera M."/>
            <person name="Marchionni L."/>
            <person name="Matsuda H."/>
            <person name="Matsuzawa S."/>
            <person name="Miki H."/>
            <person name="Mignone F."/>
            <person name="Miyake S."/>
            <person name="Morris K."/>
            <person name="Mottagui-Tabar S."/>
            <person name="Mulder N."/>
            <person name="Nakano N."/>
            <person name="Nakauchi H."/>
            <person name="Ng P."/>
            <person name="Nilsson R."/>
            <person name="Nishiguchi S."/>
            <person name="Nishikawa S."/>
            <person name="Nori F."/>
            <person name="Ohara O."/>
            <person name="Okazaki Y."/>
            <person name="Orlando V."/>
            <person name="Pang K.C."/>
            <person name="Pavan W.J."/>
            <person name="Pavesi G."/>
            <person name="Pesole G."/>
            <person name="Petrovsky N."/>
            <person name="Piazza S."/>
            <person name="Reed J."/>
            <person name="Reid J.F."/>
            <person name="Ring B.Z."/>
            <person name="Ringwald M."/>
            <person name="Rost B."/>
            <person name="Ruan Y."/>
            <person name="Salzberg S.L."/>
            <person name="Sandelin A."/>
            <person name="Schneider C."/>
            <person name="Schoenbach C."/>
            <person name="Sekiguchi K."/>
            <person name="Semple C.A."/>
            <person name="Seno S."/>
            <person name="Sessa L."/>
            <person name="Sheng Y."/>
            <person name="Shibata Y."/>
            <person name="Shimada H."/>
            <person name="Shimada K."/>
            <person name="Silva D."/>
            <person name="Sinclair B."/>
            <person name="Sperling S."/>
            <person name="Stupka E."/>
            <person name="Sugiura K."/>
            <person name="Sultana R."/>
            <person name="Takenaka Y."/>
            <person name="Taki K."/>
            <person name="Tammoja K."/>
            <person name="Tan S.L."/>
            <person name="Tang S."/>
            <person name="Taylor M.S."/>
            <person name="Tegner J."/>
            <person name="Teichmann S.A."/>
            <person name="Ueda H.R."/>
            <person name="van Nimwegen E."/>
            <person name="Verardo R."/>
            <person name="Wei C.L."/>
            <person name="Yagi K."/>
            <person name="Yamanishi H."/>
            <person name="Zabarovsky E."/>
            <person name="Zhu S."/>
            <person name="Zimmer A."/>
            <person name="Hide W."/>
            <person name="Bult C."/>
            <person name="Grimmond S.M."/>
            <person name="Teasdale R.D."/>
            <person name="Liu E.T."/>
            <person name="Brusic V."/>
            <person name="Quackenbush J."/>
            <person name="Wahlestedt C."/>
            <person name="Mattick J.S."/>
            <person name="Hume D.A."/>
            <person name="Kai C."/>
            <person name="Sasaki D."/>
            <person name="Tomaru Y."/>
            <person name="Fukuda S."/>
            <person name="Kanamori-Katayama M."/>
            <person name="Suzuki M."/>
            <person name="Aoki J."/>
            <person name="Arakawa T."/>
            <person name="Iida J."/>
            <person name="Imamura K."/>
            <person name="Itoh M."/>
            <person name="Kato T."/>
            <person name="Kawaji H."/>
            <person name="Kawagashira N."/>
            <person name="Kawashima T."/>
            <person name="Kojima M."/>
            <person name="Kondo S."/>
            <person name="Konno H."/>
            <person name="Nakano K."/>
            <person name="Ninomiya N."/>
            <person name="Nishio T."/>
            <person name="Okada M."/>
            <person name="Plessy C."/>
            <person name="Shibata K."/>
            <person name="Shiraki T."/>
            <person name="Suzuki S."/>
            <person name="Tagami M."/>
            <person name="Waki K."/>
            <person name="Watahiki A."/>
            <person name="Okamura-Oho Y."/>
            <person name="Suzuki H."/>
            <person name="Kawai J."/>
            <person name="Hayashizaki Y."/>
        </authorList>
    </citation>
    <scope>NUCLEOTIDE SEQUENCE [LARGE SCALE MRNA] (ISOFORM 2)</scope>
    <source>
        <strain>C57BL/6J</strain>
        <tissue>Embryo</tissue>
    </source>
</reference>
<reference key="2">
    <citation type="journal article" date="2009" name="PLoS Biol.">
        <title>Lineage-specific biology revealed by a finished genome assembly of the mouse.</title>
        <authorList>
            <person name="Church D.M."/>
            <person name="Goodstadt L."/>
            <person name="Hillier L.W."/>
            <person name="Zody M.C."/>
            <person name="Goldstein S."/>
            <person name="She X."/>
            <person name="Bult C.J."/>
            <person name="Agarwala R."/>
            <person name="Cherry J.L."/>
            <person name="DiCuccio M."/>
            <person name="Hlavina W."/>
            <person name="Kapustin Y."/>
            <person name="Meric P."/>
            <person name="Maglott D."/>
            <person name="Birtle Z."/>
            <person name="Marques A.C."/>
            <person name="Graves T."/>
            <person name="Zhou S."/>
            <person name="Teague B."/>
            <person name="Potamousis K."/>
            <person name="Churas C."/>
            <person name="Place M."/>
            <person name="Herschleb J."/>
            <person name="Runnheim R."/>
            <person name="Forrest D."/>
            <person name="Amos-Landgraf J."/>
            <person name="Schwartz D.C."/>
            <person name="Cheng Z."/>
            <person name="Lindblad-Toh K."/>
            <person name="Eichler E.E."/>
            <person name="Ponting C.P."/>
        </authorList>
    </citation>
    <scope>NUCLEOTIDE SEQUENCE [LARGE SCALE GENOMIC DNA]</scope>
    <source>
        <strain>C57BL/6J</strain>
    </source>
</reference>
<reference key="3">
    <citation type="journal article" date="2004" name="Genome Res.">
        <title>The status, quality, and expansion of the NIH full-length cDNA project: the Mammalian Gene Collection (MGC).</title>
        <authorList>
            <consortium name="The MGC Project Team"/>
        </authorList>
    </citation>
    <scope>NUCLEOTIDE SEQUENCE [LARGE SCALE MRNA] OF 2384-2617 (ISOFORM 1)</scope>
    <source>
        <strain>FVB/N</strain>
        <tissue>Mammary tumor</tissue>
    </source>
</reference>
<reference key="4">
    <citation type="journal article" date="2007" name="J. Immunol.">
        <title>Quantitative time-resolved phosphoproteomic analysis of mast cell signaling.</title>
        <authorList>
            <person name="Cao L."/>
            <person name="Yu K."/>
            <person name="Banh C."/>
            <person name="Nguyen V."/>
            <person name="Ritz A."/>
            <person name="Raphael B.J."/>
            <person name="Kawakami Y."/>
            <person name="Kawakami T."/>
            <person name="Salomon A.R."/>
        </authorList>
    </citation>
    <scope>PHOSPHORYLATION [LARGE SCALE ANALYSIS] AT TYR-939</scope>
    <scope>IDENTIFICATION BY MASS SPECTROMETRY [LARGE SCALE ANALYSIS]</scope>
    <source>
        <tissue>Mast cell</tissue>
    </source>
</reference>
<reference key="5">
    <citation type="journal article" date="2007" name="Proc. Natl. Acad. Sci. U.S.A.">
        <title>Large-scale phosphorylation analysis of mouse liver.</title>
        <authorList>
            <person name="Villen J."/>
            <person name="Beausoleil S.A."/>
            <person name="Gerber S.A."/>
            <person name="Gygi S.P."/>
        </authorList>
    </citation>
    <scope>PHOSPHORYLATION [LARGE SCALE ANALYSIS] AT SER-2044 AND SER-2074</scope>
    <scope>IDENTIFICATION BY MASS SPECTROMETRY [LARGE SCALE ANALYSIS]</scope>
    <source>
        <tissue>Liver</tissue>
    </source>
</reference>
<reference key="6">
    <citation type="journal article" date="2008" name="J. Proteome Res.">
        <title>Specific phosphopeptide enrichment with immobilized titanium ion affinity chromatography adsorbent for phosphoproteome analysis.</title>
        <authorList>
            <person name="Zhou H."/>
            <person name="Ye M."/>
            <person name="Dong J."/>
            <person name="Han G."/>
            <person name="Jiang X."/>
            <person name="Wu R."/>
            <person name="Zou H."/>
        </authorList>
    </citation>
    <scope>PHOSPHORYLATION [LARGE SCALE ANALYSIS] AT SER-2044</scope>
    <scope>IDENTIFICATION BY MASS SPECTROMETRY [LARGE SCALE ANALYSIS]</scope>
    <source>
        <tissue>Liver</tissue>
    </source>
</reference>
<reference key="7">
    <citation type="journal article" date="2009" name="Immunity">
        <title>The phagosomal proteome in interferon-gamma-activated macrophages.</title>
        <authorList>
            <person name="Trost M."/>
            <person name="English L."/>
            <person name="Lemieux S."/>
            <person name="Courcelles M."/>
            <person name="Desjardins M."/>
            <person name="Thibault P."/>
        </authorList>
    </citation>
    <scope>IDENTIFICATION BY MASS SPECTROMETRY [LARGE SCALE ANALYSIS]</scope>
</reference>
<reference key="8">
    <citation type="journal article" date="2010" name="Cell">
        <title>A tissue-specific atlas of mouse protein phosphorylation and expression.</title>
        <authorList>
            <person name="Huttlin E.L."/>
            <person name="Jedrychowski M.P."/>
            <person name="Elias J.E."/>
            <person name="Goswami T."/>
            <person name="Rad R."/>
            <person name="Beausoleil S.A."/>
            <person name="Villen J."/>
            <person name="Haas W."/>
            <person name="Sowa M.E."/>
            <person name="Gygi S.P."/>
        </authorList>
    </citation>
    <scope>PHOSPHORYLATION [LARGE SCALE ANALYSIS] AT SER-1138; SER-1940; SER-2044; THR-2562 AND SER-2601</scope>
    <scope>IDENTIFICATION BY MASS SPECTROMETRY [LARGE SCALE ANALYSIS]</scope>
    <source>
        <tissue>Brain</tissue>
        <tissue>Brown adipose tissue</tissue>
        <tissue>Heart</tissue>
        <tissue>Kidney</tissue>
        <tissue>Liver</tissue>
        <tissue>Lung</tissue>
        <tissue>Pancreas</tissue>
        <tissue>Spleen</tissue>
        <tissue>Testis</tissue>
    </source>
</reference>
<feature type="chain" id="PRO_0000353213" description="Ubiquitin carboxyl-terminal hydrolase 24">
    <location>
        <begin position="1"/>
        <end position="2617"/>
    </location>
</feature>
<feature type="domain" description="UBA" evidence="3">
    <location>
        <begin position="3"/>
        <end position="44"/>
    </location>
</feature>
<feature type="domain" description="USP">
    <location>
        <begin position="1686"/>
        <end position="2039"/>
    </location>
</feature>
<feature type="region of interest" description="Disordered" evidence="6">
    <location>
        <begin position="45"/>
        <end position="99"/>
    </location>
</feature>
<feature type="region of interest" description="Disordered" evidence="6">
    <location>
        <begin position="1030"/>
        <end position="1056"/>
    </location>
</feature>
<feature type="region of interest" description="Disordered" evidence="6">
    <location>
        <begin position="1127"/>
        <end position="1148"/>
    </location>
</feature>
<feature type="region of interest" description="Disordered" evidence="6">
    <location>
        <begin position="1920"/>
        <end position="1942"/>
    </location>
</feature>
<feature type="region of interest" description="Disordered" evidence="6">
    <location>
        <begin position="2060"/>
        <end position="2087"/>
    </location>
</feature>
<feature type="region of interest" description="Disordered" evidence="6">
    <location>
        <begin position="2572"/>
        <end position="2617"/>
    </location>
</feature>
<feature type="compositionally biased region" description="Gly residues" evidence="6">
    <location>
        <begin position="65"/>
        <end position="92"/>
    </location>
</feature>
<feature type="compositionally biased region" description="Low complexity" evidence="6">
    <location>
        <begin position="1031"/>
        <end position="1056"/>
    </location>
</feature>
<feature type="compositionally biased region" description="Low complexity" evidence="6">
    <location>
        <begin position="1128"/>
        <end position="1148"/>
    </location>
</feature>
<feature type="compositionally biased region" description="Low complexity" evidence="6">
    <location>
        <begin position="2066"/>
        <end position="2079"/>
    </location>
</feature>
<feature type="compositionally biased region" description="Low complexity" evidence="6">
    <location>
        <begin position="2576"/>
        <end position="2589"/>
    </location>
</feature>
<feature type="compositionally biased region" description="Basic and acidic residues" evidence="6">
    <location>
        <begin position="2608"/>
        <end position="2617"/>
    </location>
</feature>
<feature type="active site" description="Nucleophile" evidence="4 5">
    <location>
        <position position="1695"/>
    </location>
</feature>
<feature type="active site" description="Proton acceptor" evidence="4 5">
    <location>
        <position position="1967"/>
    </location>
</feature>
<feature type="modified residue" description="Phosphoserine" evidence="2">
    <location>
        <position position="62"/>
    </location>
</feature>
<feature type="modified residue" description="Phosphoserine" evidence="2">
    <location>
        <position position="85"/>
    </location>
</feature>
<feature type="modified residue" description="Phosphotyrosine" evidence="10">
    <location>
        <position position="939"/>
    </location>
</feature>
<feature type="modified residue" description="Phosphoserine" evidence="12">
    <location>
        <position position="1138"/>
    </location>
</feature>
<feature type="modified residue" description="Phosphoserine" evidence="2">
    <location>
        <position position="1282"/>
    </location>
</feature>
<feature type="modified residue" description="Phosphoserine" evidence="12">
    <location>
        <position position="1940"/>
    </location>
</feature>
<feature type="modified residue" description="Phosphoserine" evidence="9 11 12">
    <location>
        <position position="2044"/>
    </location>
</feature>
<feature type="modified residue" description="Phosphoserine" evidence="9">
    <location>
        <position position="2074"/>
    </location>
</feature>
<feature type="modified residue" description="Phosphoserine" evidence="2">
    <location>
        <position position="2558"/>
    </location>
</feature>
<feature type="modified residue" description="Phosphothreonine" evidence="12">
    <location>
        <position position="2562"/>
    </location>
</feature>
<feature type="modified residue" description="Phosphoserine" evidence="12">
    <location>
        <position position="2601"/>
    </location>
</feature>
<feature type="splice variant" id="VSP_035661" description="In isoform 2." evidence="7">
    <original>TKLIEDSTLSK</original>
    <variation>SVHLSHMWPLM</variation>
    <location>
        <begin position="408"/>
        <end position="418"/>
    </location>
</feature>
<feature type="splice variant" id="VSP_035662" description="In isoform 2." evidence="7">
    <location>
        <begin position="419"/>
        <end position="2617"/>
    </location>
</feature>
<proteinExistence type="evidence at protein level"/>
<dbReference type="EC" id="3.4.19.12"/>
<dbReference type="EMBL" id="AK045043">
    <property type="protein sequence ID" value="BAC32195.1"/>
    <property type="molecule type" value="mRNA"/>
</dbReference>
<dbReference type="EMBL" id="AL840623">
    <property type="status" value="NOT_ANNOTATED_CDS"/>
    <property type="molecule type" value="Genomic_DNA"/>
</dbReference>
<dbReference type="EMBL" id="AL954352">
    <property type="status" value="NOT_ANNOTATED_CDS"/>
    <property type="molecule type" value="Genomic_DNA"/>
</dbReference>
<dbReference type="EMBL" id="BC029165">
    <property type="status" value="NOT_ANNOTATED_CDS"/>
    <property type="molecule type" value="mRNA"/>
</dbReference>
<dbReference type="CCDS" id="CCDS51251.1">
    <molecule id="B1AY13-1"/>
</dbReference>
<dbReference type="RefSeq" id="NP_899048.2">
    <molecule id="B1AY13-1"/>
    <property type="nucleotide sequence ID" value="NM_183225.2"/>
</dbReference>
<dbReference type="SMR" id="B1AY13"/>
<dbReference type="BioGRID" id="236858">
    <property type="interactions" value="7"/>
</dbReference>
<dbReference type="FunCoup" id="B1AY13">
    <property type="interactions" value="4655"/>
</dbReference>
<dbReference type="IntAct" id="B1AY13">
    <property type="interactions" value="2"/>
</dbReference>
<dbReference type="MINT" id="B1AY13"/>
<dbReference type="STRING" id="10090.ENSMUSP00000092538"/>
<dbReference type="GlyGen" id="B1AY13">
    <property type="glycosylation" value="5 sites, 1 N-linked glycan (1 site), 1 O-linked glycan (2 sites)"/>
</dbReference>
<dbReference type="iPTMnet" id="B1AY13"/>
<dbReference type="PhosphoSitePlus" id="B1AY13"/>
<dbReference type="SwissPalm" id="B1AY13"/>
<dbReference type="jPOST" id="B1AY13"/>
<dbReference type="PaxDb" id="10090-ENSMUSP00000092538"/>
<dbReference type="PeptideAtlas" id="B1AY13"/>
<dbReference type="ProteomicsDB" id="297792">
    <molecule id="B1AY13-1"/>
</dbReference>
<dbReference type="ProteomicsDB" id="297793">
    <molecule id="B1AY13-2"/>
</dbReference>
<dbReference type="Pumba" id="B1AY13"/>
<dbReference type="Antibodypedia" id="33232">
    <property type="antibodies" value="182 antibodies from 26 providers"/>
</dbReference>
<dbReference type="DNASU" id="329908"/>
<dbReference type="GeneID" id="329908"/>
<dbReference type="KEGG" id="mmu:329908"/>
<dbReference type="UCSC" id="uc008tyf.2">
    <molecule id="B1AY13-2"/>
    <property type="organism name" value="mouse"/>
</dbReference>
<dbReference type="UCSC" id="uc008tyh.2">
    <molecule id="B1AY13-1"/>
    <property type="organism name" value="mouse"/>
</dbReference>
<dbReference type="AGR" id="MGI:1919936"/>
<dbReference type="CTD" id="23358"/>
<dbReference type="MGI" id="MGI:1919936">
    <property type="gene designation" value="Usp24"/>
</dbReference>
<dbReference type="VEuPathDB" id="HostDB:ENSMUSG00000028514"/>
<dbReference type="eggNOG" id="KOG1866">
    <property type="taxonomic scope" value="Eukaryota"/>
</dbReference>
<dbReference type="HOGENOM" id="CLU_058347_0_0_1"/>
<dbReference type="InParanoid" id="B1AY13"/>
<dbReference type="OMA" id="LCCPVDN"/>
<dbReference type="PhylomeDB" id="B1AY13"/>
<dbReference type="TreeFam" id="TF323966"/>
<dbReference type="Reactome" id="R-MMU-5689880">
    <property type="pathway name" value="Ub-specific processing proteases"/>
</dbReference>
<dbReference type="BioGRID-ORCS" id="329908">
    <property type="hits" value="9 hits in 81 CRISPR screens"/>
</dbReference>
<dbReference type="ChiTaRS" id="Usp24">
    <property type="organism name" value="mouse"/>
</dbReference>
<dbReference type="PRO" id="PR:B1AY13"/>
<dbReference type="Proteomes" id="UP000000589">
    <property type="component" value="Chromosome 4"/>
</dbReference>
<dbReference type="RNAct" id="B1AY13">
    <property type="molecule type" value="protein"/>
</dbReference>
<dbReference type="Bgee" id="ENSMUSG00000028514">
    <property type="expression patterns" value="Expressed in temporalis muscle and 258 other cell types or tissues"/>
</dbReference>
<dbReference type="ExpressionAtlas" id="B1AY13">
    <property type="expression patterns" value="baseline and differential"/>
</dbReference>
<dbReference type="GO" id="GO:0004843">
    <property type="term" value="F:cysteine-type deubiquitinase activity"/>
    <property type="evidence" value="ECO:0007669"/>
    <property type="project" value="UniProtKB-EC"/>
</dbReference>
<dbReference type="GO" id="GO:0016579">
    <property type="term" value="P:protein deubiquitination"/>
    <property type="evidence" value="ECO:0007669"/>
    <property type="project" value="InterPro"/>
</dbReference>
<dbReference type="GO" id="GO:0006508">
    <property type="term" value="P:proteolysis"/>
    <property type="evidence" value="ECO:0007669"/>
    <property type="project" value="UniProtKB-KW"/>
</dbReference>
<dbReference type="CDD" id="cd02659">
    <property type="entry name" value="peptidase_C19C"/>
    <property type="match status" value="1"/>
</dbReference>
<dbReference type="CDD" id="cd14286">
    <property type="entry name" value="UBA_UBP24"/>
    <property type="match status" value="1"/>
</dbReference>
<dbReference type="CDD" id="cd17065">
    <property type="entry name" value="Ubl_UBP24"/>
    <property type="match status" value="1"/>
</dbReference>
<dbReference type="FunFam" id="1.10.8.10:FF:000075">
    <property type="entry name" value="Ubiquitin carboxyl-terminal hydrolase 24"/>
    <property type="match status" value="1"/>
</dbReference>
<dbReference type="FunFam" id="3.90.70.10:FF:000022">
    <property type="entry name" value="Ubiquitin carboxyl-terminal hydrolase 24"/>
    <property type="match status" value="1"/>
</dbReference>
<dbReference type="Gene3D" id="3.90.70.10">
    <property type="entry name" value="Cysteine proteinases"/>
    <property type="match status" value="1"/>
</dbReference>
<dbReference type="Gene3D" id="1.10.8.10">
    <property type="entry name" value="DNA helicase RuvA subunit, C-terminal domain"/>
    <property type="match status" value="1"/>
</dbReference>
<dbReference type="Gene3D" id="3.10.20.90">
    <property type="entry name" value="Phosphatidylinositol 3-kinase Catalytic Subunit, Chain A, domain 1"/>
    <property type="match status" value="1"/>
</dbReference>
<dbReference type="InterPro" id="IPR016024">
    <property type="entry name" value="ARM-type_fold"/>
</dbReference>
<dbReference type="InterPro" id="IPR056850">
    <property type="entry name" value="ARM_UBP34_24_USP9X_Y"/>
</dbReference>
<dbReference type="InterPro" id="IPR038765">
    <property type="entry name" value="Papain-like_cys_pep_sf"/>
</dbReference>
<dbReference type="InterPro" id="IPR050164">
    <property type="entry name" value="Peptidase_C19"/>
</dbReference>
<dbReference type="InterPro" id="IPR001394">
    <property type="entry name" value="Peptidase_C19_UCH"/>
</dbReference>
<dbReference type="InterPro" id="IPR015940">
    <property type="entry name" value="UBA"/>
</dbReference>
<dbReference type="InterPro" id="IPR009060">
    <property type="entry name" value="UBA-like_sf"/>
</dbReference>
<dbReference type="InterPro" id="IPR029071">
    <property type="entry name" value="Ubiquitin-like_domsf"/>
</dbReference>
<dbReference type="InterPro" id="IPR055176">
    <property type="entry name" value="UBP24/USP9X/USP9Y_UBL"/>
</dbReference>
<dbReference type="InterPro" id="IPR047061">
    <property type="entry name" value="UBP24_Ubl"/>
</dbReference>
<dbReference type="InterPro" id="IPR033382">
    <property type="entry name" value="USP24_UBA"/>
</dbReference>
<dbReference type="InterPro" id="IPR018200">
    <property type="entry name" value="USP_CS"/>
</dbReference>
<dbReference type="InterPro" id="IPR028889">
    <property type="entry name" value="USP_dom"/>
</dbReference>
<dbReference type="PANTHER" id="PTHR24006">
    <property type="entry name" value="UBIQUITIN CARBOXYL-TERMINAL HYDROLASE"/>
    <property type="match status" value="1"/>
</dbReference>
<dbReference type="PANTHER" id="PTHR24006:SF729">
    <property type="entry name" value="UBIQUITIN CARBOXYL-TERMINAL HYDROLASE 24"/>
    <property type="match status" value="1"/>
</dbReference>
<dbReference type="Pfam" id="PF25010">
    <property type="entry name" value="ARM_UBP24_USP9X-Y"/>
    <property type="match status" value="1"/>
</dbReference>
<dbReference type="Pfam" id="PF00443">
    <property type="entry name" value="UCH"/>
    <property type="match status" value="1"/>
</dbReference>
<dbReference type="Pfam" id="PF22900">
    <property type="entry name" value="UCH_UBL1"/>
    <property type="match status" value="1"/>
</dbReference>
<dbReference type="SUPFAM" id="SSF48371">
    <property type="entry name" value="ARM repeat"/>
    <property type="match status" value="1"/>
</dbReference>
<dbReference type="SUPFAM" id="SSF54001">
    <property type="entry name" value="Cysteine proteinases"/>
    <property type="match status" value="1"/>
</dbReference>
<dbReference type="SUPFAM" id="SSF46934">
    <property type="entry name" value="UBA-like"/>
    <property type="match status" value="1"/>
</dbReference>
<dbReference type="SUPFAM" id="SSF54236">
    <property type="entry name" value="Ubiquitin-like"/>
    <property type="match status" value="1"/>
</dbReference>
<dbReference type="PROSITE" id="PS50030">
    <property type="entry name" value="UBA"/>
    <property type="match status" value="1"/>
</dbReference>
<dbReference type="PROSITE" id="PS00972">
    <property type="entry name" value="USP_1"/>
    <property type="match status" value="1"/>
</dbReference>
<dbReference type="PROSITE" id="PS00973">
    <property type="entry name" value="USP_2"/>
    <property type="match status" value="1"/>
</dbReference>
<dbReference type="PROSITE" id="PS50235">
    <property type="entry name" value="USP_3"/>
    <property type="match status" value="1"/>
</dbReference>
<organism>
    <name type="scientific">Mus musculus</name>
    <name type="common">Mouse</name>
    <dbReference type="NCBI Taxonomy" id="10090"/>
    <lineage>
        <taxon>Eukaryota</taxon>
        <taxon>Metazoa</taxon>
        <taxon>Chordata</taxon>
        <taxon>Craniata</taxon>
        <taxon>Vertebrata</taxon>
        <taxon>Euteleostomi</taxon>
        <taxon>Mammalia</taxon>
        <taxon>Eutheria</taxon>
        <taxon>Euarchontoglires</taxon>
        <taxon>Glires</taxon>
        <taxon>Rodentia</taxon>
        <taxon>Myomorpha</taxon>
        <taxon>Muroidea</taxon>
        <taxon>Muridae</taxon>
        <taxon>Murinae</taxon>
        <taxon>Mus</taxon>
        <taxon>Mus</taxon>
    </lineage>
</organism>